<feature type="chain" id="PRO_0000161306" description="Fumarate hydratase class II">
    <location>
        <begin position="1"/>
        <end position="463"/>
    </location>
</feature>
<feature type="region of interest" description="Disordered" evidence="2">
    <location>
        <begin position="121"/>
        <end position="141"/>
    </location>
</feature>
<feature type="active site" description="Proton donor/acceptor" evidence="1">
    <location>
        <position position="188"/>
    </location>
</feature>
<feature type="active site" evidence="1">
    <location>
        <position position="318"/>
    </location>
</feature>
<feature type="binding site" evidence="1">
    <location>
        <begin position="98"/>
        <end position="100"/>
    </location>
    <ligand>
        <name>substrate</name>
    </ligand>
</feature>
<feature type="binding site" description="in site B" evidence="1">
    <location>
        <begin position="129"/>
        <end position="132"/>
    </location>
    <ligand>
        <name>substrate</name>
    </ligand>
</feature>
<feature type="binding site" evidence="1">
    <location>
        <begin position="139"/>
        <end position="141"/>
    </location>
    <ligand>
        <name>substrate</name>
    </ligand>
</feature>
<feature type="binding site" evidence="1">
    <location>
        <position position="187"/>
    </location>
    <ligand>
        <name>substrate</name>
    </ligand>
</feature>
<feature type="binding site" evidence="1">
    <location>
        <position position="319"/>
    </location>
    <ligand>
        <name>substrate</name>
    </ligand>
</feature>
<feature type="binding site" evidence="1">
    <location>
        <begin position="324"/>
        <end position="326"/>
    </location>
    <ligand>
        <name>substrate</name>
    </ligand>
</feature>
<feature type="site" description="Important for catalytic activity" evidence="1">
    <location>
        <position position="331"/>
    </location>
</feature>
<accession>Q92GW0</accession>
<organism>
    <name type="scientific">Rickettsia conorii (strain ATCC VR-613 / Malish 7)</name>
    <dbReference type="NCBI Taxonomy" id="272944"/>
    <lineage>
        <taxon>Bacteria</taxon>
        <taxon>Pseudomonadati</taxon>
        <taxon>Pseudomonadota</taxon>
        <taxon>Alphaproteobacteria</taxon>
        <taxon>Rickettsiales</taxon>
        <taxon>Rickettsiaceae</taxon>
        <taxon>Rickettsieae</taxon>
        <taxon>Rickettsia</taxon>
        <taxon>spotted fever group</taxon>
    </lineage>
</organism>
<gene>
    <name evidence="1" type="primary">fumC</name>
    <name type="ordered locus">RC1012</name>
</gene>
<dbReference type="EC" id="4.2.1.2" evidence="1"/>
<dbReference type="EMBL" id="AE006914">
    <property type="protein sequence ID" value="AAL03550.1"/>
    <property type="molecule type" value="Genomic_DNA"/>
</dbReference>
<dbReference type="PIR" id="D97826">
    <property type="entry name" value="D97826"/>
</dbReference>
<dbReference type="RefSeq" id="WP_010977593.1">
    <property type="nucleotide sequence ID" value="NC_003103.1"/>
</dbReference>
<dbReference type="SMR" id="Q92GW0"/>
<dbReference type="GeneID" id="928156"/>
<dbReference type="KEGG" id="rco:RC1012"/>
<dbReference type="HOGENOM" id="CLU_021594_4_1_5"/>
<dbReference type="UniPathway" id="UPA00223">
    <property type="reaction ID" value="UER01007"/>
</dbReference>
<dbReference type="Proteomes" id="UP000000816">
    <property type="component" value="Chromosome"/>
</dbReference>
<dbReference type="GO" id="GO:0005737">
    <property type="term" value="C:cytoplasm"/>
    <property type="evidence" value="ECO:0007669"/>
    <property type="project" value="UniProtKB-SubCell"/>
</dbReference>
<dbReference type="GO" id="GO:0004333">
    <property type="term" value="F:fumarate hydratase activity"/>
    <property type="evidence" value="ECO:0007669"/>
    <property type="project" value="UniProtKB-UniRule"/>
</dbReference>
<dbReference type="GO" id="GO:0006106">
    <property type="term" value="P:fumarate metabolic process"/>
    <property type="evidence" value="ECO:0007669"/>
    <property type="project" value="InterPro"/>
</dbReference>
<dbReference type="GO" id="GO:0006108">
    <property type="term" value="P:malate metabolic process"/>
    <property type="evidence" value="ECO:0007669"/>
    <property type="project" value="TreeGrafter"/>
</dbReference>
<dbReference type="GO" id="GO:0006099">
    <property type="term" value="P:tricarboxylic acid cycle"/>
    <property type="evidence" value="ECO:0007669"/>
    <property type="project" value="UniProtKB-UniRule"/>
</dbReference>
<dbReference type="CDD" id="cd01362">
    <property type="entry name" value="Fumarase_classII"/>
    <property type="match status" value="1"/>
</dbReference>
<dbReference type="FunFam" id="1.10.40.30:FF:000002">
    <property type="entry name" value="Fumarate hydratase class II"/>
    <property type="match status" value="1"/>
</dbReference>
<dbReference type="FunFam" id="1.10.275.10:FF:000001">
    <property type="entry name" value="Fumarate hydratase, mitochondrial"/>
    <property type="match status" value="1"/>
</dbReference>
<dbReference type="FunFam" id="1.20.200.10:FF:000001">
    <property type="entry name" value="Fumarate hydratase, mitochondrial"/>
    <property type="match status" value="1"/>
</dbReference>
<dbReference type="Gene3D" id="1.10.40.30">
    <property type="entry name" value="Fumarase/aspartase (C-terminal domain)"/>
    <property type="match status" value="1"/>
</dbReference>
<dbReference type="Gene3D" id="1.20.200.10">
    <property type="entry name" value="Fumarase/aspartase (Central domain)"/>
    <property type="match status" value="1"/>
</dbReference>
<dbReference type="Gene3D" id="1.10.275.10">
    <property type="entry name" value="Fumarase/aspartase (N-terminal domain)"/>
    <property type="match status" value="1"/>
</dbReference>
<dbReference type="HAMAP" id="MF_00743">
    <property type="entry name" value="FumaraseC"/>
    <property type="match status" value="1"/>
</dbReference>
<dbReference type="InterPro" id="IPR005677">
    <property type="entry name" value="Fum_hydII"/>
</dbReference>
<dbReference type="InterPro" id="IPR024083">
    <property type="entry name" value="Fumarase/histidase_N"/>
</dbReference>
<dbReference type="InterPro" id="IPR018951">
    <property type="entry name" value="Fumarase_C_C"/>
</dbReference>
<dbReference type="InterPro" id="IPR020557">
    <property type="entry name" value="Fumarate_lyase_CS"/>
</dbReference>
<dbReference type="InterPro" id="IPR000362">
    <property type="entry name" value="Fumarate_lyase_fam"/>
</dbReference>
<dbReference type="InterPro" id="IPR022761">
    <property type="entry name" value="Fumarate_lyase_N"/>
</dbReference>
<dbReference type="InterPro" id="IPR008948">
    <property type="entry name" value="L-Aspartase-like"/>
</dbReference>
<dbReference type="NCBIfam" id="TIGR00979">
    <property type="entry name" value="fumC_II"/>
    <property type="match status" value="1"/>
</dbReference>
<dbReference type="NCBIfam" id="NF008909">
    <property type="entry name" value="PRK12273.1"/>
    <property type="match status" value="1"/>
</dbReference>
<dbReference type="PANTHER" id="PTHR11444">
    <property type="entry name" value="ASPARTATEAMMONIA/ARGININOSUCCINATE/ADENYLOSUCCINATE LYASE"/>
    <property type="match status" value="1"/>
</dbReference>
<dbReference type="PANTHER" id="PTHR11444:SF1">
    <property type="entry name" value="FUMARATE HYDRATASE, MITOCHONDRIAL"/>
    <property type="match status" value="1"/>
</dbReference>
<dbReference type="Pfam" id="PF10415">
    <property type="entry name" value="FumaraseC_C"/>
    <property type="match status" value="1"/>
</dbReference>
<dbReference type="Pfam" id="PF00206">
    <property type="entry name" value="Lyase_1"/>
    <property type="match status" value="1"/>
</dbReference>
<dbReference type="PRINTS" id="PR00145">
    <property type="entry name" value="ARGSUCLYASE"/>
</dbReference>
<dbReference type="PRINTS" id="PR00149">
    <property type="entry name" value="FUMRATELYASE"/>
</dbReference>
<dbReference type="SUPFAM" id="SSF48557">
    <property type="entry name" value="L-aspartase-like"/>
    <property type="match status" value="1"/>
</dbReference>
<dbReference type="PROSITE" id="PS00163">
    <property type="entry name" value="FUMARATE_LYASES"/>
    <property type="match status" value="1"/>
</dbReference>
<reference key="1">
    <citation type="journal article" date="2001" name="Science">
        <title>Mechanisms of evolution in Rickettsia conorii and R. prowazekii.</title>
        <authorList>
            <person name="Ogata H."/>
            <person name="Audic S."/>
            <person name="Renesto-Audiffren P."/>
            <person name="Fournier P.-E."/>
            <person name="Barbe V."/>
            <person name="Samson D."/>
            <person name="Roux V."/>
            <person name="Cossart P."/>
            <person name="Weissenbach J."/>
            <person name="Claverie J.-M."/>
            <person name="Raoult D."/>
        </authorList>
    </citation>
    <scope>NUCLEOTIDE SEQUENCE [LARGE SCALE GENOMIC DNA]</scope>
    <source>
        <strain>ATCC VR-613 / Malish 7</strain>
    </source>
</reference>
<sequence>MKNYRTESDSFGEIQIEEKFYWGAQTQRSLENFKIGKQKMPEILIRALAILKKCAAQVNHEFGDLEAKIAISIDKATDRILEGEFEDNFPLVVWQTGSGTQTNMNMNEVIASIANEELTGKKGGKSPVHPNDHVNKGQSSNDSFPTAMHIATVLATKQQLIPALNNILTSLQDKSKDWDKIIKIGRTHLQDATPLTLKQEFSGYITQIEYALERIENALQKVYLLAQGGTAVGTGINSKIGFDIKFAEKVAEFTKQPFKTAPNKFESLAAHDALVEFSGTLNTIAVSLMKIANDIRLLGSGPRCGLGELHLPENEPGSSIMPGKVNPTQVEALTMVCSQVMGNHVTVTIAGSNGHLELNVFKPVIIYNILQSIELLSDSVNSFVTHCVKGLEPNIARINDLRDKSLMLVTALNPHIGYDNAAKIAKEAHKHGITLKEAAKKLNLLSEAKFDKIVVPEKMVSQS</sequence>
<proteinExistence type="inferred from homology"/>
<protein>
    <recommendedName>
        <fullName evidence="1">Fumarate hydratase class II</fullName>
        <shortName evidence="1">Fumarase C</shortName>
        <ecNumber evidence="1">4.2.1.2</ecNumber>
    </recommendedName>
    <alternativeName>
        <fullName evidence="1">Aerobic fumarase</fullName>
    </alternativeName>
    <alternativeName>
        <fullName evidence="1">Iron-independent fumarase</fullName>
    </alternativeName>
</protein>
<comment type="function">
    <text evidence="1">Involved in the TCA cycle. Catalyzes the stereospecific interconversion of fumarate to L-malate.</text>
</comment>
<comment type="catalytic activity">
    <reaction evidence="1">
        <text>(S)-malate = fumarate + H2O</text>
        <dbReference type="Rhea" id="RHEA:12460"/>
        <dbReference type="ChEBI" id="CHEBI:15377"/>
        <dbReference type="ChEBI" id="CHEBI:15589"/>
        <dbReference type="ChEBI" id="CHEBI:29806"/>
        <dbReference type="EC" id="4.2.1.2"/>
    </reaction>
</comment>
<comment type="pathway">
    <text evidence="1">Carbohydrate metabolism; tricarboxylic acid cycle; (S)-malate from fumarate: step 1/1.</text>
</comment>
<comment type="subunit">
    <text evidence="1">Homotetramer.</text>
</comment>
<comment type="subcellular location">
    <subcellularLocation>
        <location evidence="1">Cytoplasm</location>
    </subcellularLocation>
</comment>
<comment type="miscellaneous">
    <text evidence="1">There are 2 substrate-binding sites: the catalytic A site, and the non-catalytic B site that may play a role in the transfer of substrate or product between the active site and the solvent. Alternatively, the B site may bind allosteric effectors.</text>
</comment>
<comment type="similarity">
    <text evidence="1">Belongs to the class-II fumarase/aspartase family. Fumarase subfamily.</text>
</comment>
<keyword id="KW-0963">Cytoplasm</keyword>
<keyword id="KW-0456">Lyase</keyword>
<keyword id="KW-0816">Tricarboxylic acid cycle</keyword>
<name>FUMC_RICCN</name>
<evidence type="ECO:0000255" key="1">
    <source>
        <dbReference type="HAMAP-Rule" id="MF_00743"/>
    </source>
</evidence>
<evidence type="ECO:0000256" key="2">
    <source>
        <dbReference type="SAM" id="MobiDB-lite"/>
    </source>
</evidence>